<reference key="1">
    <citation type="journal article" date="2005" name="BMC Genomics">
        <title>Bacterial genome adaptation to niches: divergence of the potential virulence genes in three Burkholderia species of different survival strategies.</title>
        <authorList>
            <person name="Kim H.S."/>
            <person name="Schell M.A."/>
            <person name="Yu Y."/>
            <person name="Ulrich R.L."/>
            <person name="Sarria S.H."/>
            <person name="Nierman W.C."/>
            <person name="DeShazer D."/>
        </authorList>
    </citation>
    <scope>NUCLEOTIDE SEQUENCE [LARGE SCALE GENOMIC DNA]</scope>
    <source>
        <strain>ATCC 700388 / DSM 13276 / CCUG 48851 / CIP 106301 / E264</strain>
    </source>
</reference>
<sequence>MPDRTAAPSYPFVYLASQSPRRRELLDQLGVRYALLAPTPDEDAEALEAELPGEAPDHYVLRVCVAKAEAARARLVASGKPAAPVLVADTTVTLDGAILGKPADAADALAMLARLAGRTHDVLTALAVIDATGELMPPALSRSAVRFAPATRDALARYVETGEPFGKAGAYAIQGRAAEFVERIDGSHSGIMGLPLFEAAALLRAAHVAF</sequence>
<proteinExistence type="inferred from homology"/>
<gene>
    <name type="ordered locus">BTH_I1009</name>
</gene>
<comment type="function">
    <text evidence="1">Nucleoside triphosphate pyrophosphatase that hydrolyzes dTTP and UTP. May have a dual role in cell division arrest and in preventing the incorporation of modified nucleotides into cellular nucleic acids.</text>
</comment>
<comment type="catalytic activity">
    <reaction evidence="1">
        <text>dTTP + H2O = dTMP + diphosphate + H(+)</text>
        <dbReference type="Rhea" id="RHEA:28534"/>
        <dbReference type="ChEBI" id="CHEBI:15377"/>
        <dbReference type="ChEBI" id="CHEBI:15378"/>
        <dbReference type="ChEBI" id="CHEBI:33019"/>
        <dbReference type="ChEBI" id="CHEBI:37568"/>
        <dbReference type="ChEBI" id="CHEBI:63528"/>
        <dbReference type="EC" id="3.6.1.9"/>
    </reaction>
</comment>
<comment type="catalytic activity">
    <reaction evidence="1">
        <text>UTP + H2O = UMP + diphosphate + H(+)</text>
        <dbReference type="Rhea" id="RHEA:29395"/>
        <dbReference type="ChEBI" id="CHEBI:15377"/>
        <dbReference type="ChEBI" id="CHEBI:15378"/>
        <dbReference type="ChEBI" id="CHEBI:33019"/>
        <dbReference type="ChEBI" id="CHEBI:46398"/>
        <dbReference type="ChEBI" id="CHEBI:57865"/>
        <dbReference type="EC" id="3.6.1.9"/>
    </reaction>
</comment>
<comment type="cofactor">
    <cofactor evidence="1">
        <name>a divalent metal cation</name>
        <dbReference type="ChEBI" id="CHEBI:60240"/>
    </cofactor>
</comment>
<comment type="subcellular location">
    <subcellularLocation>
        <location evidence="1">Cytoplasm</location>
    </subcellularLocation>
</comment>
<comment type="similarity">
    <text evidence="1">Belongs to the Maf family. YhdE subfamily.</text>
</comment>
<organism>
    <name type="scientific">Burkholderia thailandensis (strain ATCC 700388 / DSM 13276 / CCUG 48851 / CIP 106301 / E264)</name>
    <dbReference type="NCBI Taxonomy" id="271848"/>
    <lineage>
        <taxon>Bacteria</taxon>
        <taxon>Pseudomonadati</taxon>
        <taxon>Pseudomonadota</taxon>
        <taxon>Betaproteobacteria</taxon>
        <taxon>Burkholderiales</taxon>
        <taxon>Burkholderiaceae</taxon>
        <taxon>Burkholderia</taxon>
        <taxon>pseudomallei group</taxon>
    </lineage>
</organism>
<evidence type="ECO:0000255" key="1">
    <source>
        <dbReference type="HAMAP-Rule" id="MF_00528"/>
    </source>
</evidence>
<accession>Q2SZT6</accession>
<dbReference type="EC" id="3.6.1.9" evidence="1"/>
<dbReference type="EMBL" id="CP000086">
    <property type="protein sequence ID" value="ABC38680.1"/>
    <property type="molecule type" value="Genomic_DNA"/>
</dbReference>
<dbReference type="RefSeq" id="WP_009892291.1">
    <property type="nucleotide sequence ID" value="NZ_CP008785.1"/>
</dbReference>
<dbReference type="SMR" id="Q2SZT6"/>
<dbReference type="GeneID" id="45120760"/>
<dbReference type="KEGG" id="bte:BTH_I1009"/>
<dbReference type="HOGENOM" id="CLU_040416_2_1_4"/>
<dbReference type="Proteomes" id="UP000001930">
    <property type="component" value="Chromosome I"/>
</dbReference>
<dbReference type="GO" id="GO:0005737">
    <property type="term" value="C:cytoplasm"/>
    <property type="evidence" value="ECO:0007669"/>
    <property type="project" value="UniProtKB-SubCell"/>
</dbReference>
<dbReference type="GO" id="GO:0036218">
    <property type="term" value="F:dTTP diphosphatase activity"/>
    <property type="evidence" value="ECO:0007669"/>
    <property type="project" value="RHEA"/>
</dbReference>
<dbReference type="GO" id="GO:0036221">
    <property type="term" value="F:UTP diphosphatase activity"/>
    <property type="evidence" value="ECO:0007669"/>
    <property type="project" value="RHEA"/>
</dbReference>
<dbReference type="GO" id="GO:0009117">
    <property type="term" value="P:nucleotide metabolic process"/>
    <property type="evidence" value="ECO:0007669"/>
    <property type="project" value="UniProtKB-KW"/>
</dbReference>
<dbReference type="CDD" id="cd00555">
    <property type="entry name" value="Maf"/>
    <property type="match status" value="1"/>
</dbReference>
<dbReference type="Gene3D" id="3.90.950.10">
    <property type="match status" value="1"/>
</dbReference>
<dbReference type="HAMAP" id="MF_00528">
    <property type="entry name" value="Maf"/>
    <property type="match status" value="1"/>
</dbReference>
<dbReference type="InterPro" id="IPR029001">
    <property type="entry name" value="ITPase-like_fam"/>
</dbReference>
<dbReference type="InterPro" id="IPR003697">
    <property type="entry name" value="Maf-like"/>
</dbReference>
<dbReference type="NCBIfam" id="TIGR00172">
    <property type="entry name" value="maf"/>
    <property type="match status" value="1"/>
</dbReference>
<dbReference type="PANTHER" id="PTHR43213">
    <property type="entry name" value="BIFUNCTIONAL DTTP/UTP PYROPHOSPHATASE/METHYLTRANSFERASE PROTEIN-RELATED"/>
    <property type="match status" value="1"/>
</dbReference>
<dbReference type="PANTHER" id="PTHR43213:SF5">
    <property type="entry name" value="BIFUNCTIONAL DTTP_UTP PYROPHOSPHATASE_METHYLTRANSFERASE PROTEIN-RELATED"/>
    <property type="match status" value="1"/>
</dbReference>
<dbReference type="Pfam" id="PF02545">
    <property type="entry name" value="Maf"/>
    <property type="match status" value="1"/>
</dbReference>
<dbReference type="PIRSF" id="PIRSF006305">
    <property type="entry name" value="Maf"/>
    <property type="match status" value="1"/>
</dbReference>
<dbReference type="SUPFAM" id="SSF52972">
    <property type="entry name" value="ITPase-like"/>
    <property type="match status" value="1"/>
</dbReference>
<feature type="chain" id="PRO_0000267273" description="dTTP/UTP pyrophosphatase">
    <location>
        <begin position="1"/>
        <end position="210"/>
    </location>
</feature>
<feature type="active site" description="Proton acceptor" evidence="1">
    <location>
        <position position="89"/>
    </location>
</feature>
<feature type="site" description="Important for substrate specificity" evidence="1">
    <location>
        <position position="21"/>
    </location>
</feature>
<feature type="site" description="Important for substrate specificity" evidence="1">
    <location>
        <position position="90"/>
    </location>
</feature>
<feature type="site" description="Important for substrate specificity" evidence="1">
    <location>
        <position position="174"/>
    </location>
</feature>
<name>NTPPA_BURTA</name>
<protein>
    <recommendedName>
        <fullName evidence="1">dTTP/UTP pyrophosphatase</fullName>
        <shortName evidence="1">dTTPase/UTPase</shortName>
        <ecNumber evidence="1">3.6.1.9</ecNumber>
    </recommendedName>
    <alternativeName>
        <fullName evidence="1">Nucleoside triphosphate pyrophosphatase</fullName>
    </alternativeName>
    <alternativeName>
        <fullName evidence="1">Nucleotide pyrophosphatase</fullName>
        <shortName evidence="1">Nucleotide PPase</shortName>
    </alternativeName>
</protein>
<keyword id="KW-0963">Cytoplasm</keyword>
<keyword id="KW-0378">Hydrolase</keyword>
<keyword id="KW-0546">Nucleotide metabolism</keyword>